<proteinExistence type="inferred from homology"/>
<keyword id="KW-0143">Chaperone</keyword>
<keyword id="KW-0963">Cytoplasm</keyword>
<keyword id="KW-0342">GTP-binding</keyword>
<keyword id="KW-0996">Nickel insertion</keyword>
<keyword id="KW-0547">Nucleotide-binding</keyword>
<name>UREG_VARPS</name>
<feature type="chain" id="PRO_1000215142" description="Urease accessory protein UreG">
    <location>
        <begin position="1"/>
        <end position="216"/>
    </location>
</feature>
<feature type="binding site" evidence="1">
    <location>
        <begin position="24"/>
        <end position="31"/>
    </location>
    <ligand>
        <name>GTP</name>
        <dbReference type="ChEBI" id="CHEBI:37565"/>
    </ligand>
</feature>
<sequence length="216" mass="23548">MTSALHHIPHRTKKLPPLRVGIGGPVGSGKTTLLEMLCKAMRDKYDLVAITNDIYTKEDQRLLTVAGALPAERIMGVETGGCPHTAIREDASINLEAIDRMLEDFPDADVVFVESGGDNLAATFSPELSDLTIYVIDVAAGEKIPRKGGPGITKSDLFVINKTDLAPYVGANLDVMEQDTQRMRRQRPYVMTNLKTHTGVAEVVAFIEKRGMLTAD</sequence>
<reference key="1">
    <citation type="journal article" date="2011" name="J. Bacteriol.">
        <title>Complete genome sequence of the metabolically versatile plant growth-promoting endophyte, Variovorax paradoxus S110.</title>
        <authorList>
            <person name="Han J.I."/>
            <person name="Choi H.K."/>
            <person name="Lee S.W."/>
            <person name="Orwin P.M."/>
            <person name="Kim J."/>
            <person name="Laroe S.L."/>
            <person name="Kim T.G."/>
            <person name="O'Neil J."/>
            <person name="Leadbetter J.R."/>
            <person name="Lee S.Y."/>
            <person name="Hur C.G."/>
            <person name="Spain J.C."/>
            <person name="Ovchinnikova G."/>
            <person name="Goodwin L."/>
            <person name="Han C."/>
        </authorList>
    </citation>
    <scope>NUCLEOTIDE SEQUENCE [LARGE SCALE GENOMIC DNA]</scope>
    <source>
        <strain>S110</strain>
    </source>
</reference>
<dbReference type="EMBL" id="CP001635">
    <property type="protein sequence ID" value="ACS20861.1"/>
    <property type="molecule type" value="Genomic_DNA"/>
</dbReference>
<dbReference type="SMR" id="C5CY05"/>
<dbReference type="STRING" id="543728.Vapar_4248"/>
<dbReference type="KEGG" id="vap:Vapar_4248"/>
<dbReference type="eggNOG" id="COG0378">
    <property type="taxonomic scope" value="Bacteria"/>
</dbReference>
<dbReference type="HOGENOM" id="CLU_072144_1_0_4"/>
<dbReference type="OrthoDB" id="9802035at2"/>
<dbReference type="GO" id="GO:0005737">
    <property type="term" value="C:cytoplasm"/>
    <property type="evidence" value="ECO:0007669"/>
    <property type="project" value="UniProtKB-SubCell"/>
</dbReference>
<dbReference type="GO" id="GO:0005525">
    <property type="term" value="F:GTP binding"/>
    <property type="evidence" value="ECO:0007669"/>
    <property type="project" value="UniProtKB-KW"/>
</dbReference>
<dbReference type="GO" id="GO:0003924">
    <property type="term" value="F:GTPase activity"/>
    <property type="evidence" value="ECO:0007669"/>
    <property type="project" value="InterPro"/>
</dbReference>
<dbReference type="GO" id="GO:0016151">
    <property type="term" value="F:nickel cation binding"/>
    <property type="evidence" value="ECO:0007669"/>
    <property type="project" value="UniProtKB-UniRule"/>
</dbReference>
<dbReference type="GO" id="GO:0043419">
    <property type="term" value="P:urea catabolic process"/>
    <property type="evidence" value="ECO:0007669"/>
    <property type="project" value="InterPro"/>
</dbReference>
<dbReference type="CDD" id="cd05540">
    <property type="entry name" value="UreG"/>
    <property type="match status" value="1"/>
</dbReference>
<dbReference type="FunFam" id="3.40.50.300:FF:000208">
    <property type="entry name" value="Urease accessory protein UreG"/>
    <property type="match status" value="1"/>
</dbReference>
<dbReference type="Gene3D" id="3.40.50.300">
    <property type="entry name" value="P-loop containing nucleotide triphosphate hydrolases"/>
    <property type="match status" value="1"/>
</dbReference>
<dbReference type="HAMAP" id="MF_01389">
    <property type="entry name" value="UreG"/>
    <property type="match status" value="1"/>
</dbReference>
<dbReference type="InterPro" id="IPR003495">
    <property type="entry name" value="CobW/HypB/UreG_nucleotide-bd"/>
</dbReference>
<dbReference type="InterPro" id="IPR027417">
    <property type="entry name" value="P-loop_NTPase"/>
</dbReference>
<dbReference type="InterPro" id="IPR004400">
    <property type="entry name" value="UreG"/>
</dbReference>
<dbReference type="NCBIfam" id="TIGR00101">
    <property type="entry name" value="ureG"/>
    <property type="match status" value="1"/>
</dbReference>
<dbReference type="PANTHER" id="PTHR31715">
    <property type="entry name" value="UREASE ACCESSORY PROTEIN G"/>
    <property type="match status" value="1"/>
</dbReference>
<dbReference type="PANTHER" id="PTHR31715:SF0">
    <property type="entry name" value="UREASE ACCESSORY PROTEIN G"/>
    <property type="match status" value="1"/>
</dbReference>
<dbReference type="Pfam" id="PF02492">
    <property type="entry name" value="cobW"/>
    <property type="match status" value="1"/>
</dbReference>
<dbReference type="PIRSF" id="PIRSF005624">
    <property type="entry name" value="Ni-bind_GTPase"/>
    <property type="match status" value="1"/>
</dbReference>
<dbReference type="SUPFAM" id="SSF52540">
    <property type="entry name" value="P-loop containing nucleoside triphosphate hydrolases"/>
    <property type="match status" value="1"/>
</dbReference>
<protein>
    <recommendedName>
        <fullName evidence="1">Urease accessory protein UreG</fullName>
    </recommendedName>
</protein>
<comment type="function">
    <text evidence="1">Facilitates the functional incorporation of the urease nickel metallocenter. This process requires GTP hydrolysis, probably effectuated by UreG.</text>
</comment>
<comment type="subunit">
    <text evidence="1">Homodimer. UreD, UreF and UreG form a complex that acts as a GTP-hydrolysis-dependent molecular chaperone, activating the urease apoprotein by helping to assemble the nickel containing metallocenter of UreC. The UreE protein probably delivers the nickel.</text>
</comment>
<comment type="subcellular location">
    <subcellularLocation>
        <location evidence="1">Cytoplasm</location>
    </subcellularLocation>
</comment>
<comment type="similarity">
    <text evidence="1">Belongs to the SIMIBI class G3E GTPase family. UreG subfamily.</text>
</comment>
<evidence type="ECO:0000255" key="1">
    <source>
        <dbReference type="HAMAP-Rule" id="MF_01389"/>
    </source>
</evidence>
<accession>C5CY05</accession>
<gene>
    <name evidence="1" type="primary">ureG</name>
    <name type="ordered locus">Vapar_4248</name>
</gene>
<organism>
    <name type="scientific">Variovorax paradoxus (strain S110)</name>
    <dbReference type="NCBI Taxonomy" id="543728"/>
    <lineage>
        <taxon>Bacteria</taxon>
        <taxon>Pseudomonadati</taxon>
        <taxon>Pseudomonadota</taxon>
        <taxon>Betaproteobacteria</taxon>
        <taxon>Burkholderiales</taxon>
        <taxon>Comamonadaceae</taxon>
        <taxon>Variovorax</taxon>
    </lineage>
</organism>